<comment type="function">
    <text evidence="1">Required for maturation of 30S ribosomal subunits.</text>
</comment>
<comment type="subcellular location">
    <subcellularLocation>
        <location evidence="1">Cytoplasm</location>
    </subcellularLocation>
</comment>
<comment type="similarity">
    <text evidence="1">Belongs to the RimP family.</text>
</comment>
<accession>A9M1D3</accession>
<reference key="1">
    <citation type="journal article" date="2008" name="Genomics">
        <title>Characterization of ST-4821 complex, a unique Neisseria meningitidis clone.</title>
        <authorList>
            <person name="Peng J."/>
            <person name="Yang L."/>
            <person name="Yang F."/>
            <person name="Yang J."/>
            <person name="Yan Y."/>
            <person name="Nie H."/>
            <person name="Zhang X."/>
            <person name="Xiong Z."/>
            <person name="Jiang Y."/>
            <person name="Cheng F."/>
            <person name="Xu X."/>
            <person name="Chen S."/>
            <person name="Sun L."/>
            <person name="Li W."/>
            <person name="Shen Y."/>
            <person name="Shao Z."/>
            <person name="Liang X."/>
            <person name="Xu J."/>
            <person name="Jin Q."/>
        </authorList>
    </citation>
    <scope>NUCLEOTIDE SEQUENCE [LARGE SCALE GENOMIC DNA]</scope>
    <source>
        <strain>053442</strain>
    </source>
</reference>
<dbReference type="EMBL" id="CP000381">
    <property type="protein sequence ID" value="ABX73698.1"/>
    <property type="molecule type" value="Genomic_DNA"/>
</dbReference>
<dbReference type="RefSeq" id="WP_012221904.1">
    <property type="nucleotide sequence ID" value="NC_010120.1"/>
</dbReference>
<dbReference type="SMR" id="A9M1D3"/>
<dbReference type="KEGG" id="nmn:NMCC_1541"/>
<dbReference type="HOGENOM" id="CLU_070525_1_0_4"/>
<dbReference type="Proteomes" id="UP000001177">
    <property type="component" value="Chromosome"/>
</dbReference>
<dbReference type="GO" id="GO:0005829">
    <property type="term" value="C:cytosol"/>
    <property type="evidence" value="ECO:0007669"/>
    <property type="project" value="TreeGrafter"/>
</dbReference>
<dbReference type="GO" id="GO:0000028">
    <property type="term" value="P:ribosomal small subunit assembly"/>
    <property type="evidence" value="ECO:0007669"/>
    <property type="project" value="TreeGrafter"/>
</dbReference>
<dbReference type="GO" id="GO:0006412">
    <property type="term" value="P:translation"/>
    <property type="evidence" value="ECO:0007669"/>
    <property type="project" value="TreeGrafter"/>
</dbReference>
<dbReference type="CDD" id="cd01734">
    <property type="entry name" value="YlxS_C"/>
    <property type="match status" value="1"/>
</dbReference>
<dbReference type="Gene3D" id="2.30.30.180">
    <property type="entry name" value="Ribosome maturation factor RimP, C-terminal domain"/>
    <property type="match status" value="1"/>
</dbReference>
<dbReference type="Gene3D" id="3.30.300.70">
    <property type="entry name" value="RimP-like superfamily, N-terminal"/>
    <property type="match status" value="1"/>
</dbReference>
<dbReference type="HAMAP" id="MF_01077">
    <property type="entry name" value="RimP"/>
    <property type="match status" value="1"/>
</dbReference>
<dbReference type="InterPro" id="IPR003728">
    <property type="entry name" value="Ribosome_maturation_RimP"/>
</dbReference>
<dbReference type="InterPro" id="IPR028998">
    <property type="entry name" value="RimP_C"/>
</dbReference>
<dbReference type="InterPro" id="IPR036847">
    <property type="entry name" value="RimP_C_sf"/>
</dbReference>
<dbReference type="InterPro" id="IPR028989">
    <property type="entry name" value="RimP_N"/>
</dbReference>
<dbReference type="InterPro" id="IPR035956">
    <property type="entry name" value="RimP_N_sf"/>
</dbReference>
<dbReference type="NCBIfam" id="NF000929">
    <property type="entry name" value="PRK00092.2-1"/>
    <property type="match status" value="1"/>
</dbReference>
<dbReference type="PANTHER" id="PTHR33867">
    <property type="entry name" value="RIBOSOME MATURATION FACTOR RIMP"/>
    <property type="match status" value="1"/>
</dbReference>
<dbReference type="PANTHER" id="PTHR33867:SF1">
    <property type="entry name" value="RIBOSOME MATURATION FACTOR RIMP"/>
    <property type="match status" value="1"/>
</dbReference>
<dbReference type="Pfam" id="PF17384">
    <property type="entry name" value="DUF150_C"/>
    <property type="match status" value="1"/>
</dbReference>
<dbReference type="Pfam" id="PF02576">
    <property type="entry name" value="RimP_N"/>
    <property type="match status" value="1"/>
</dbReference>
<dbReference type="SUPFAM" id="SSF74942">
    <property type="entry name" value="YhbC-like, C-terminal domain"/>
    <property type="match status" value="1"/>
</dbReference>
<dbReference type="SUPFAM" id="SSF75420">
    <property type="entry name" value="YhbC-like, N-terminal domain"/>
    <property type="match status" value="1"/>
</dbReference>
<name>RIMP_NEIM0</name>
<protein>
    <recommendedName>
        <fullName evidence="1">Ribosome maturation factor RimP</fullName>
    </recommendedName>
</protein>
<organism>
    <name type="scientific">Neisseria meningitidis serogroup C (strain 053442)</name>
    <dbReference type="NCBI Taxonomy" id="374833"/>
    <lineage>
        <taxon>Bacteria</taxon>
        <taxon>Pseudomonadati</taxon>
        <taxon>Pseudomonadota</taxon>
        <taxon>Betaproteobacteria</taxon>
        <taxon>Neisseriales</taxon>
        <taxon>Neisseriaceae</taxon>
        <taxon>Neisseria</taxon>
    </lineage>
</organism>
<proteinExistence type="inferred from homology"/>
<gene>
    <name evidence="1" type="primary">rimP</name>
    <name type="ordered locus">NMCC_1541</name>
</gene>
<sequence length="143" mass="15967">MDIQTILEKTLPGLGYELVDFELTAQGTLRVFIDKEGGITVEDCATVSNHLSRVFMVEDIDYKNLEISSPGLDRPLKKAADFVRFAGQNAKIKTRLPIDGQKNFIGKIEGCENDTVTISFDGKTVQIGLDNIDKARLRPEFKF</sequence>
<feature type="chain" id="PRO_0000384718" description="Ribosome maturation factor RimP">
    <location>
        <begin position="1"/>
        <end position="143"/>
    </location>
</feature>
<keyword id="KW-0963">Cytoplasm</keyword>
<keyword id="KW-0690">Ribosome biogenesis</keyword>
<evidence type="ECO:0000255" key="1">
    <source>
        <dbReference type="HAMAP-Rule" id="MF_01077"/>
    </source>
</evidence>